<organism>
    <name type="scientific">Psychromonas ingrahamii (strain DSM 17664 / CCUG 51855 / 37)</name>
    <dbReference type="NCBI Taxonomy" id="357804"/>
    <lineage>
        <taxon>Bacteria</taxon>
        <taxon>Pseudomonadati</taxon>
        <taxon>Pseudomonadota</taxon>
        <taxon>Gammaproteobacteria</taxon>
        <taxon>Alteromonadales</taxon>
        <taxon>Psychromonadaceae</taxon>
        <taxon>Psychromonas</taxon>
    </lineage>
</organism>
<evidence type="ECO:0000255" key="1">
    <source>
        <dbReference type="HAMAP-Rule" id="MF_01006"/>
    </source>
</evidence>
<sequence>MSELQIVVLALIQGLTEFLPISSSAHLILPSQLLGWQDQGLAFDLILNIGTLSAVLIYFRMEVINMSRAWVGSLRGKGETQDSRLAWWILWSTIPAALIGFFGKSLVETYLRSGYVIAVTTTVFGLLLWWADANAKQVKTEYQTGLKGALFIGFAQVLALIPGTSRSGITITAGLMLGLTRNGAARFSFLMSIPIIAMASGYDLLKFILSDEYVDWGPLFLGAGISFVSAILCIHVFLILLNRVGMMPFVIYRLLLGGFLFYILSGT</sequence>
<gene>
    <name evidence="1" type="primary">uppP</name>
    <name type="ordered locus">Ping_0174</name>
</gene>
<keyword id="KW-0046">Antibiotic resistance</keyword>
<keyword id="KW-0997">Cell inner membrane</keyword>
<keyword id="KW-1003">Cell membrane</keyword>
<keyword id="KW-0133">Cell shape</keyword>
<keyword id="KW-0961">Cell wall biogenesis/degradation</keyword>
<keyword id="KW-0378">Hydrolase</keyword>
<keyword id="KW-0472">Membrane</keyword>
<keyword id="KW-0573">Peptidoglycan synthesis</keyword>
<keyword id="KW-1185">Reference proteome</keyword>
<keyword id="KW-0812">Transmembrane</keyword>
<keyword id="KW-1133">Transmembrane helix</keyword>
<dbReference type="EC" id="3.6.1.27" evidence="1"/>
<dbReference type="EMBL" id="CP000510">
    <property type="protein sequence ID" value="ABM02042.1"/>
    <property type="molecule type" value="Genomic_DNA"/>
</dbReference>
<dbReference type="RefSeq" id="WP_011768601.1">
    <property type="nucleotide sequence ID" value="NC_008709.1"/>
</dbReference>
<dbReference type="SMR" id="A1SRC7"/>
<dbReference type="STRING" id="357804.Ping_0174"/>
<dbReference type="KEGG" id="pin:Ping_0174"/>
<dbReference type="eggNOG" id="COG1968">
    <property type="taxonomic scope" value="Bacteria"/>
</dbReference>
<dbReference type="HOGENOM" id="CLU_060296_1_0_6"/>
<dbReference type="OrthoDB" id="9808289at2"/>
<dbReference type="Proteomes" id="UP000000639">
    <property type="component" value="Chromosome"/>
</dbReference>
<dbReference type="GO" id="GO:0005886">
    <property type="term" value="C:plasma membrane"/>
    <property type="evidence" value="ECO:0007669"/>
    <property type="project" value="UniProtKB-SubCell"/>
</dbReference>
<dbReference type="GO" id="GO:0050380">
    <property type="term" value="F:undecaprenyl-diphosphatase activity"/>
    <property type="evidence" value="ECO:0007669"/>
    <property type="project" value="UniProtKB-UniRule"/>
</dbReference>
<dbReference type="GO" id="GO:0071555">
    <property type="term" value="P:cell wall organization"/>
    <property type="evidence" value="ECO:0007669"/>
    <property type="project" value="UniProtKB-KW"/>
</dbReference>
<dbReference type="GO" id="GO:0009252">
    <property type="term" value="P:peptidoglycan biosynthetic process"/>
    <property type="evidence" value="ECO:0007669"/>
    <property type="project" value="UniProtKB-KW"/>
</dbReference>
<dbReference type="GO" id="GO:0008360">
    <property type="term" value="P:regulation of cell shape"/>
    <property type="evidence" value="ECO:0007669"/>
    <property type="project" value="UniProtKB-KW"/>
</dbReference>
<dbReference type="GO" id="GO:0046677">
    <property type="term" value="P:response to antibiotic"/>
    <property type="evidence" value="ECO:0007669"/>
    <property type="project" value="UniProtKB-UniRule"/>
</dbReference>
<dbReference type="HAMAP" id="MF_01006">
    <property type="entry name" value="Undec_diphosphatase"/>
    <property type="match status" value="1"/>
</dbReference>
<dbReference type="InterPro" id="IPR003824">
    <property type="entry name" value="UppP"/>
</dbReference>
<dbReference type="NCBIfam" id="NF001393">
    <property type="entry name" value="PRK00281.2-4"/>
    <property type="match status" value="1"/>
</dbReference>
<dbReference type="NCBIfam" id="TIGR00753">
    <property type="entry name" value="undec_PP_bacA"/>
    <property type="match status" value="1"/>
</dbReference>
<dbReference type="PANTHER" id="PTHR30622">
    <property type="entry name" value="UNDECAPRENYL-DIPHOSPHATASE"/>
    <property type="match status" value="1"/>
</dbReference>
<dbReference type="PANTHER" id="PTHR30622:SF4">
    <property type="entry name" value="UNDECAPRENYL-DIPHOSPHATASE"/>
    <property type="match status" value="1"/>
</dbReference>
<dbReference type="Pfam" id="PF02673">
    <property type="entry name" value="BacA"/>
    <property type="match status" value="1"/>
</dbReference>
<reference key="1">
    <citation type="journal article" date="2008" name="BMC Genomics">
        <title>Genomics of an extreme psychrophile, Psychromonas ingrahamii.</title>
        <authorList>
            <person name="Riley M."/>
            <person name="Staley J.T."/>
            <person name="Danchin A."/>
            <person name="Wang T.Z."/>
            <person name="Brettin T.S."/>
            <person name="Hauser L.J."/>
            <person name="Land M.L."/>
            <person name="Thompson L.S."/>
        </authorList>
    </citation>
    <scope>NUCLEOTIDE SEQUENCE [LARGE SCALE GENOMIC DNA]</scope>
    <source>
        <strain>DSM 17664 / CCUG 51855 / 37</strain>
    </source>
</reference>
<accession>A1SRC7</accession>
<proteinExistence type="inferred from homology"/>
<comment type="function">
    <text evidence="1">Catalyzes the dephosphorylation of undecaprenyl diphosphate (UPP). Confers resistance to bacitracin.</text>
</comment>
<comment type="catalytic activity">
    <reaction evidence="1">
        <text>di-trans,octa-cis-undecaprenyl diphosphate + H2O = di-trans,octa-cis-undecaprenyl phosphate + phosphate + H(+)</text>
        <dbReference type="Rhea" id="RHEA:28094"/>
        <dbReference type="ChEBI" id="CHEBI:15377"/>
        <dbReference type="ChEBI" id="CHEBI:15378"/>
        <dbReference type="ChEBI" id="CHEBI:43474"/>
        <dbReference type="ChEBI" id="CHEBI:58405"/>
        <dbReference type="ChEBI" id="CHEBI:60392"/>
        <dbReference type="EC" id="3.6.1.27"/>
    </reaction>
</comment>
<comment type="subcellular location">
    <subcellularLocation>
        <location evidence="1">Cell inner membrane</location>
        <topology evidence="1">Multi-pass membrane protein</topology>
    </subcellularLocation>
</comment>
<comment type="miscellaneous">
    <text>Bacitracin is thought to be involved in the inhibition of peptidoglycan synthesis by sequestering undecaprenyl diphosphate, thereby reducing the pool of lipid carrier available.</text>
</comment>
<comment type="similarity">
    <text evidence="1">Belongs to the UppP family.</text>
</comment>
<protein>
    <recommendedName>
        <fullName evidence="1">Undecaprenyl-diphosphatase</fullName>
        <ecNumber evidence="1">3.6.1.27</ecNumber>
    </recommendedName>
    <alternativeName>
        <fullName evidence="1">Bacitracin resistance protein</fullName>
    </alternativeName>
    <alternativeName>
        <fullName evidence="1">Undecaprenyl pyrophosphate phosphatase</fullName>
    </alternativeName>
</protein>
<feature type="chain" id="PRO_0000290753" description="Undecaprenyl-diphosphatase">
    <location>
        <begin position="1"/>
        <end position="267"/>
    </location>
</feature>
<feature type="transmembrane region" description="Helical" evidence="1">
    <location>
        <begin position="1"/>
        <end position="21"/>
    </location>
</feature>
<feature type="transmembrane region" description="Helical" evidence="1">
    <location>
        <begin position="39"/>
        <end position="59"/>
    </location>
</feature>
<feature type="transmembrane region" description="Helical" evidence="1">
    <location>
        <begin position="87"/>
        <end position="107"/>
    </location>
</feature>
<feature type="transmembrane region" description="Helical" evidence="1">
    <location>
        <begin position="113"/>
        <end position="133"/>
    </location>
</feature>
<feature type="transmembrane region" description="Helical" evidence="1">
    <location>
        <begin position="144"/>
        <end position="164"/>
    </location>
</feature>
<feature type="transmembrane region" description="Helical" evidence="1">
    <location>
        <begin position="189"/>
        <end position="209"/>
    </location>
</feature>
<feature type="transmembrane region" description="Helical" evidence="1">
    <location>
        <begin position="219"/>
        <end position="239"/>
    </location>
</feature>
<feature type="transmembrane region" description="Helical" evidence="1">
    <location>
        <begin position="244"/>
        <end position="264"/>
    </location>
</feature>
<name>UPPP_PSYIN</name>